<proteinExistence type="inferred from homology"/>
<feature type="chain" id="PRO_1000133339" description="Oxygen-dependent choline dehydrogenase">
    <location>
        <begin position="1"/>
        <end position="560"/>
    </location>
</feature>
<feature type="active site" description="Proton acceptor" evidence="1">
    <location>
        <position position="475"/>
    </location>
</feature>
<feature type="binding site" evidence="1">
    <location>
        <begin position="8"/>
        <end position="37"/>
    </location>
    <ligand>
        <name>FAD</name>
        <dbReference type="ChEBI" id="CHEBI:57692"/>
    </ligand>
</feature>
<keyword id="KW-0274">FAD</keyword>
<keyword id="KW-0285">Flavoprotein</keyword>
<keyword id="KW-0520">NAD</keyword>
<keyword id="KW-0560">Oxidoreductase</keyword>
<keyword id="KW-1185">Reference proteome</keyword>
<accession>B2FQ89</accession>
<comment type="function">
    <text evidence="1">Involved in the biosynthesis of the osmoprotectant glycine betaine. Catalyzes the oxidation of choline to betaine aldehyde and betaine aldehyde to glycine betaine at the same rate.</text>
</comment>
<comment type="catalytic activity">
    <reaction evidence="1">
        <text>choline + A = betaine aldehyde + AH2</text>
        <dbReference type="Rhea" id="RHEA:17433"/>
        <dbReference type="ChEBI" id="CHEBI:13193"/>
        <dbReference type="ChEBI" id="CHEBI:15354"/>
        <dbReference type="ChEBI" id="CHEBI:15710"/>
        <dbReference type="ChEBI" id="CHEBI:17499"/>
        <dbReference type="EC" id="1.1.99.1"/>
    </reaction>
</comment>
<comment type="catalytic activity">
    <reaction evidence="1">
        <text>betaine aldehyde + NAD(+) + H2O = glycine betaine + NADH + 2 H(+)</text>
        <dbReference type="Rhea" id="RHEA:15305"/>
        <dbReference type="ChEBI" id="CHEBI:15377"/>
        <dbReference type="ChEBI" id="CHEBI:15378"/>
        <dbReference type="ChEBI" id="CHEBI:15710"/>
        <dbReference type="ChEBI" id="CHEBI:17750"/>
        <dbReference type="ChEBI" id="CHEBI:57540"/>
        <dbReference type="ChEBI" id="CHEBI:57945"/>
        <dbReference type="EC" id="1.2.1.8"/>
    </reaction>
</comment>
<comment type="cofactor">
    <cofactor evidence="1">
        <name>FAD</name>
        <dbReference type="ChEBI" id="CHEBI:57692"/>
    </cofactor>
</comment>
<comment type="pathway">
    <text evidence="1">Amine and polyamine biosynthesis; betaine biosynthesis via choline pathway; betaine aldehyde from choline (cytochrome c reductase route): step 1/1.</text>
</comment>
<comment type="similarity">
    <text evidence="1">Belongs to the GMC oxidoreductase family.</text>
</comment>
<organism>
    <name type="scientific">Stenotrophomonas maltophilia (strain K279a)</name>
    <dbReference type="NCBI Taxonomy" id="522373"/>
    <lineage>
        <taxon>Bacteria</taxon>
        <taxon>Pseudomonadati</taxon>
        <taxon>Pseudomonadota</taxon>
        <taxon>Gammaproteobacteria</taxon>
        <taxon>Lysobacterales</taxon>
        <taxon>Lysobacteraceae</taxon>
        <taxon>Stenotrophomonas</taxon>
        <taxon>Stenotrophomonas maltophilia group</taxon>
    </lineage>
</organism>
<sequence>MSTHNEYDYIIIGAGSAGNVLATRLTEDADVSVLLLEAGGPDYRLDFRTQMPAALAFPLQGKRYNWAYKTDPEPFMNNRRMDCGRGKGLGGSSLINGMCYIRGNAMDYDNWASMPGLEDWTYLDCLPYFRKAETRDIGPNDYHGGDGPLRVTTPKAGNNELFAAMVEAGVQAGYPRTDDLNGYQQEGFGPMDRTVTPKGRRSSTARGYLDLAKPRPNLTIVTHALTDRILFSGKRAVGVQWLRNDQPQRATARREVLLCGGAIASPQILQRSGVGPADLLRSLDIDLVHHLPGVGANLQDHLEMYLQYECKKPVSLAPALKLYNQPAIGAEWLFLGTGIGASNQFEAGGFIRSDAEFDWPNLQYHFLPVAINYNGSNPIKAHSFQMHVGSMRSPSRGRIHVRSKDPREHPSILFNYMSHEQDWREFRAAIRITREIFAQPALAPYSGREISPGSALQTDAQIDAFVREHAETAYHPSCSNKMGHADDPMAVVDGQGRVHGLEGLRIVDASIMPQVVTGNLNAPTIMMAEKLADVIRGRTPLARSTAPYYKANGAPVRKQD</sequence>
<evidence type="ECO:0000255" key="1">
    <source>
        <dbReference type="HAMAP-Rule" id="MF_00750"/>
    </source>
</evidence>
<protein>
    <recommendedName>
        <fullName evidence="1">Oxygen-dependent choline dehydrogenase</fullName>
        <shortName evidence="1">CDH</shortName>
        <shortName evidence="1">CHD</shortName>
        <ecNumber evidence="1">1.1.99.1</ecNumber>
    </recommendedName>
    <alternativeName>
        <fullName evidence="1">Betaine aldehyde dehydrogenase</fullName>
        <shortName evidence="1">BADH</shortName>
        <ecNumber evidence="1">1.2.1.8</ecNumber>
    </alternativeName>
</protein>
<gene>
    <name evidence="1" type="primary">betA</name>
    <name type="ordered locus">Smlt2237</name>
</gene>
<name>BETA_STRMK</name>
<dbReference type="EC" id="1.1.99.1" evidence="1"/>
<dbReference type="EC" id="1.2.1.8" evidence="1"/>
<dbReference type="EMBL" id="AM743169">
    <property type="protein sequence ID" value="CAQ45734.1"/>
    <property type="molecule type" value="Genomic_DNA"/>
</dbReference>
<dbReference type="RefSeq" id="WP_012480082.1">
    <property type="nucleotide sequence ID" value="NC_010943.1"/>
</dbReference>
<dbReference type="SMR" id="B2FQ89"/>
<dbReference type="EnsemblBacteria" id="CAQ45734">
    <property type="protein sequence ID" value="CAQ45734"/>
    <property type="gene ID" value="Smlt2237"/>
</dbReference>
<dbReference type="KEGG" id="sml:Smlt2237"/>
<dbReference type="PATRIC" id="fig|522373.3.peg.2131"/>
<dbReference type="eggNOG" id="COG2303">
    <property type="taxonomic scope" value="Bacteria"/>
</dbReference>
<dbReference type="HOGENOM" id="CLU_002865_7_1_6"/>
<dbReference type="UniPathway" id="UPA00529">
    <property type="reaction ID" value="UER00385"/>
</dbReference>
<dbReference type="Proteomes" id="UP000008840">
    <property type="component" value="Chromosome"/>
</dbReference>
<dbReference type="GO" id="GO:0016020">
    <property type="term" value="C:membrane"/>
    <property type="evidence" value="ECO:0007669"/>
    <property type="project" value="TreeGrafter"/>
</dbReference>
<dbReference type="GO" id="GO:0008802">
    <property type="term" value="F:betaine-aldehyde dehydrogenase (NAD+) activity"/>
    <property type="evidence" value="ECO:0007669"/>
    <property type="project" value="UniProtKB-EC"/>
</dbReference>
<dbReference type="GO" id="GO:0008812">
    <property type="term" value="F:choline dehydrogenase activity"/>
    <property type="evidence" value="ECO:0007669"/>
    <property type="project" value="UniProtKB-UniRule"/>
</dbReference>
<dbReference type="GO" id="GO:0050660">
    <property type="term" value="F:flavin adenine dinucleotide binding"/>
    <property type="evidence" value="ECO:0007669"/>
    <property type="project" value="InterPro"/>
</dbReference>
<dbReference type="GO" id="GO:0019285">
    <property type="term" value="P:glycine betaine biosynthetic process from choline"/>
    <property type="evidence" value="ECO:0007669"/>
    <property type="project" value="UniProtKB-UniRule"/>
</dbReference>
<dbReference type="Gene3D" id="3.50.50.60">
    <property type="entry name" value="FAD/NAD(P)-binding domain"/>
    <property type="match status" value="1"/>
</dbReference>
<dbReference type="Gene3D" id="3.30.560.10">
    <property type="entry name" value="Glucose Oxidase, domain 3"/>
    <property type="match status" value="1"/>
</dbReference>
<dbReference type="HAMAP" id="MF_00750">
    <property type="entry name" value="Choline_dehydrogen"/>
    <property type="match status" value="1"/>
</dbReference>
<dbReference type="InterPro" id="IPR011533">
    <property type="entry name" value="BetA"/>
</dbReference>
<dbReference type="InterPro" id="IPR036188">
    <property type="entry name" value="FAD/NAD-bd_sf"/>
</dbReference>
<dbReference type="InterPro" id="IPR012132">
    <property type="entry name" value="GMC_OxRdtase"/>
</dbReference>
<dbReference type="InterPro" id="IPR000172">
    <property type="entry name" value="GMC_OxRdtase_N"/>
</dbReference>
<dbReference type="InterPro" id="IPR007867">
    <property type="entry name" value="GMC_OxRtase_C"/>
</dbReference>
<dbReference type="NCBIfam" id="TIGR01810">
    <property type="entry name" value="betA"/>
    <property type="match status" value="1"/>
</dbReference>
<dbReference type="NCBIfam" id="NF002550">
    <property type="entry name" value="PRK02106.1"/>
    <property type="match status" value="1"/>
</dbReference>
<dbReference type="PANTHER" id="PTHR11552:SF147">
    <property type="entry name" value="CHOLINE DEHYDROGENASE, MITOCHONDRIAL"/>
    <property type="match status" value="1"/>
</dbReference>
<dbReference type="PANTHER" id="PTHR11552">
    <property type="entry name" value="GLUCOSE-METHANOL-CHOLINE GMC OXIDOREDUCTASE"/>
    <property type="match status" value="1"/>
</dbReference>
<dbReference type="Pfam" id="PF05199">
    <property type="entry name" value="GMC_oxred_C"/>
    <property type="match status" value="1"/>
</dbReference>
<dbReference type="Pfam" id="PF00732">
    <property type="entry name" value="GMC_oxred_N"/>
    <property type="match status" value="1"/>
</dbReference>
<dbReference type="PIRSF" id="PIRSF000137">
    <property type="entry name" value="Alcohol_oxidase"/>
    <property type="match status" value="1"/>
</dbReference>
<dbReference type="SUPFAM" id="SSF54373">
    <property type="entry name" value="FAD-linked reductases, C-terminal domain"/>
    <property type="match status" value="1"/>
</dbReference>
<dbReference type="SUPFAM" id="SSF51905">
    <property type="entry name" value="FAD/NAD(P)-binding domain"/>
    <property type="match status" value="1"/>
</dbReference>
<dbReference type="PROSITE" id="PS00623">
    <property type="entry name" value="GMC_OXRED_1"/>
    <property type="match status" value="1"/>
</dbReference>
<dbReference type="PROSITE" id="PS00624">
    <property type="entry name" value="GMC_OXRED_2"/>
    <property type="match status" value="1"/>
</dbReference>
<reference key="1">
    <citation type="journal article" date="2008" name="Genome Biol.">
        <title>The complete genome, comparative and functional analysis of Stenotrophomonas maltophilia reveals an organism heavily shielded by drug resistance determinants.</title>
        <authorList>
            <person name="Crossman L.C."/>
            <person name="Gould V.C."/>
            <person name="Dow J.M."/>
            <person name="Vernikos G.S."/>
            <person name="Okazaki A."/>
            <person name="Sebaihia M."/>
            <person name="Saunders D."/>
            <person name="Arrowsmith C."/>
            <person name="Carver T."/>
            <person name="Peters N."/>
            <person name="Adlem E."/>
            <person name="Kerhornou A."/>
            <person name="Lord A."/>
            <person name="Murphy L."/>
            <person name="Seeger K."/>
            <person name="Squares R."/>
            <person name="Rutter S."/>
            <person name="Quail M.A."/>
            <person name="Rajandream M.A."/>
            <person name="Harris D."/>
            <person name="Churcher C."/>
            <person name="Bentley S.D."/>
            <person name="Parkhill J."/>
            <person name="Thomson N.R."/>
            <person name="Avison M.B."/>
        </authorList>
    </citation>
    <scope>NUCLEOTIDE SEQUENCE [LARGE SCALE GENOMIC DNA]</scope>
    <source>
        <strain>K279a</strain>
    </source>
</reference>